<dbReference type="EC" id="3.6.1.9" evidence="1"/>
<dbReference type="EMBL" id="AP009380">
    <property type="protein sequence ID" value="BAG33214.1"/>
    <property type="molecule type" value="Genomic_DNA"/>
</dbReference>
<dbReference type="RefSeq" id="WP_012457705.1">
    <property type="nucleotide sequence ID" value="NC_010729.1"/>
</dbReference>
<dbReference type="SMR" id="B2RIL9"/>
<dbReference type="GeneID" id="29255919"/>
<dbReference type="KEGG" id="pgn:PGN_0695"/>
<dbReference type="eggNOG" id="COG0424">
    <property type="taxonomic scope" value="Bacteria"/>
</dbReference>
<dbReference type="HOGENOM" id="CLU_040416_0_0_10"/>
<dbReference type="OrthoDB" id="9807767at2"/>
<dbReference type="BioCyc" id="PGIN431947:G1G2V-765-MONOMER"/>
<dbReference type="Proteomes" id="UP000008842">
    <property type="component" value="Chromosome"/>
</dbReference>
<dbReference type="GO" id="GO:0005737">
    <property type="term" value="C:cytoplasm"/>
    <property type="evidence" value="ECO:0007669"/>
    <property type="project" value="UniProtKB-SubCell"/>
</dbReference>
<dbReference type="GO" id="GO:0036218">
    <property type="term" value="F:dTTP diphosphatase activity"/>
    <property type="evidence" value="ECO:0007669"/>
    <property type="project" value="RHEA"/>
</dbReference>
<dbReference type="GO" id="GO:0036221">
    <property type="term" value="F:UTP diphosphatase activity"/>
    <property type="evidence" value="ECO:0007669"/>
    <property type="project" value="RHEA"/>
</dbReference>
<dbReference type="GO" id="GO:0009117">
    <property type="term" value="P:nucleotide metabolic process"/>
    <property type="evidence" value="ECO:0007669"/>
    <property type="project" value="UniProtKB-KW"/>
</dbReference>
<dbReference type="CDD" id="cd00555">
    <property type="entry name" value="Maf"/>
    <property type="match status" value="1"/>
</dbReference>
<dbReference type="Gene3D" id="3.90.950.10">
    <property type="match status" value="1"/>
</dbReference>
<dbReference type="HAMAP" id="MF_00528">
    <property type="entry name" value="Maf"/>
    <property type="match status" value="1"/>
</dbReference>
<dbReference type="InterPro" id="IPR029001">
    <property type="entry name" value="ITPase-like_fam"/>
</dbReference>
<dbReference type="InterPro" id="IPR003697">
    <property type="entry name" value="Maf-like"/>
</dbReference>
<dbReference type="NCBIfam" id="TIGR00172">
    <property type="entry name" value="maf"/>
    <property type="match status" value="1"/>
</dbReference>
<dbReference type="PANTHER" id="PTHR43213">
    <property type="entry name" value="BIFUNCTIONAL DTTP/UTP PYROPHOSPHATASE/METHYLTRANSFERASE PROTEIN-RELATED"/>
    <property type="match status" value="1"/>
</dbReference>
<dbReference type="PANTHER" id="PTHR43213:SF5">
    <property type="entry name" value="BIFUNCTIONAL DTTP_UTP PYROPHOSPHATASE_METHYLTRANSFERASE PROTEIN-RELATED"/>
    <property type="match status" value="1"/>
</dbReference>
<dbReference type="Pfam" id="PF02545">
    <property type="entry name" value="Maf"/>
    <property type="match status" value="1"/>
</dbReference>
<dbReference type="PIRSF" id="PIRSF006305">
    <property type="entry name" value="Maf"/>
    <property type="match status" value="1"/>
</dbReference>
<dbReference type="SUPFAM" id="SSF52972">
    <property type="entry name" value="ITPase-like"/>
    <property type="match status" value="1"/>
</dbReference>
<comment type="function">
    <text evidence="1">Nucleoside triphosphate pyrophosphatase that hydrolyzes dTTP and UTP. May have a dual role in cell division arrest and in preventing the incorporation of modified nucleotides into cellular nucleic acids.</text>
</comment>
<comment type="catalytic activity">
    <reaction evidence="1">
        <text>dTTP + H2O = dTMP + diphosphate + H(+)</text>
        <dbReference type="Rhea" id="RHEA:28534"/>
        <dbReference type="ChEBI" id="CHEBI:15377"/>
        <dbReference type="ChEBI" id="CHEBI:15378"/>
        <dbReference type="ChEBI" id="CHEBI:33019"/>
        <dbReference type="ChEBI" id="CHEBI:37568"/>
        <dbReference type="ChEBI" id="CHEBI:63528"/>
        <dbReference type="EC" id="3.6.1.9"/>
    </reaction>
</comment>
<comment type="catalytic activity">
    <reaction evidence="1">
        <text>UTP + H2O = UMP + diphosphate + H(+)</text>
        <dbReference type="Rhea" id="RHEA:29395"/>
        <dbReference type="ChEBI" id="CHEBI:15377"/>
        <dbReference type="ChEBI" id="CHEBI:15378"/>
        <dbReference type="ChEBI" id="CHEBI:33019"/>
        <dbReference type="ChEBI" id="CHEBI:46398"/>
        <dbReference type="ChEBI" id="CHEBI:57865"/>
        <dbReference type="EC" id="3.6.1.9"/>
    </reaction>
</comment>
<comment type="cofactor">
    <cofactor evidence="1">
        <name>a divalent metal cation</name>
        <dbReference type="ChEBI" id="CHEBI:60240"/>
    </cofactor>
</comment>
<comment type="subcellular location">
    <subcellularLocation>
        <location evidence="1">Cytoplasm</location>
    </subcellularLocation>
</comment>
<comment type="similarity">
    <text evidence="1">Belongs to the Maf family. YhdE subfamily.</text>
</comment>
<sequence>MLDNLKKYKIVLGSQSPRRKELLSGLDIRFEQKAMPDIAEDYPAGLDPEKVPLYLARMKAEAYRSKGMMQDSTLLITADTVVIVDGAILGKPQDREEAARMLRTLSGRTHQVVTGVCISHRWETRAFSCSSLVTFAHLSDEEIDYYLERYRPYDKAGSYGIQEWIGYIAIQRVEGSFYNVMGLPVHLLYNELKDFGESN</sequence>
<name>NTPPA_PORG3</name>
<evidence type="ECO:0000255" key="1">
    <source>
        <dbReference type="HAMAP-Rule" id="MF_00528"/>
    </source>
</evidence>
<keyword id="KW-0963">Cytoplasm</keyword>
<keyword id="KW-0378">Hydrolase</keyword>
<keyword id="KW-0546">Nucleotide metabolism</keyword>
<organism>
    <name type="scientific">Porphyromonas gingivalis (strain ATCC 33277 / DSM 20709 / CIP 103683 / JCM 12257 / NCTC 11834 / 2561)</name>
    <dbReference type="NCBI Taxonomy" id="431947"/>
    <lineage>
        <taxon>Bacteria</taxon>
        <taxon>Pseudomonadati</taxon>
        <taxon>Bacteroidota</taxon>
        <taxon>Bacteroidia</taxon>
        <taxon>Bacteroidales</taxon>
        <taxon>Porphyromonadaceae</taxon>
        <taxon>Porphyromonas</taxon>
    </lineage>
</organism>
<protein>
    <recommendedName>
        <fullName evidence="1">dTTP/UTP pyrophosphatase</fullName>
        <shortName evidence="1">dTTPase/UTPase</shortName>
        <ecNumber evidence="1">3.6.1.9</ecNumber>
    </recommendedName>
    <alternativeName>
        <fullName evidence="1">Nucleoside triphosphate pyrophosphatase</fullName>
    </alternativeName>
    <alternativeName>
        <fullName evidence="1">Nucleotide pyrophosphatase</fullName>
        <shortName evidence="1">Nucleotide PPase</shortName>
    </alternativeName>
</protein>
<gene>
    <name type="ordered locus">PGN_0695</name>
</gene>
<proteinExistence type="inferred from homology"/>
<reference key="1">
    <citation type="journal article" date="2008" name="DNA Res.">
        <title>Determination of the genome sequence of Porphyromonas gingivalis strain ATCC 33277 and genomic comparison with strain W83 revealed extensive genome rearrangements in P. gingivalis.</title>
        <authorList>
            <person name="Naito M."/>
            <person name="Hirakawa H."/>
            <person name="Yamashita A."/>
            <person name="Ohara N."/>
            <person name="Shoji M."/>
            <person name="Yukitake H."/>
            <person name="Nakayama K."/>
            <person name="Toh H."/>
            <person name="Yoshimura F."/>
            <person name="Kuhara S."/>
            <person name="Hattori M."/>
            <person name="Hayashi T."/>
            <person name="Nakayama K."/>
        </authorList>
    </citation>
    <scope>NUCLEOTIDE SEQUENCE [LARGE SCALE GENOMIC DNA]</scope>
    <source>
        <strain>ATCC 33277 / DSM 20709 / CIP 103683 / JCM 12257 / NCTC 11834 / 2561</strain>
    </source>
</reference>
<accession>B2RIL9</accession>
<feature type="chain" id="PRO_1000127796" description="dTTP/UTP pyrophosphatase">
    <location>
        <begin position="1"/>
        <end position="199"/>
    </location>
</feature>
<feature type="active site" description="Proton acceptor" evidence="1">
    <location>
        <position position="79"/>
    </location>
</feature>
<feature type="site" description="Important for substrate specificity" evidence="1">
    <location>
        <position position="18"/>
    </location>
</feature>
<feature type="site" description="Important for substrate specificity" evidence="1">
    <location>
        <position position="80"/>
    </location>
</feature>
<feature type="site" description="Important for substrate specificity" evidence="1">
    <location>
        <position position="162"/>
    </location>
</feature>